<protein>
    <recommendedName>
        <fullName evidence="1">3-isopropylmalate dehydratase large subunit</fullName>
        <ecNumber evidence="1">4.2.1.33</ecNumber>
    </recommendedName>
    <alternativeName>
        <fullName evidence="1">Alpha-IPM isomerase</fullName>
        <shortName evidence="1">IPMI</shortName>
    </alternativeName>
    <alternativeName>
        <fullName evidence="1">Isopropylmalate isomerase</fullName>
    </alternativeName>
</protein>
<organism>
    <name type="scientific">Clostridioides difficile (strain 630)</name>
    <name type="common">Peptoclostridium difficile</name>
    <dbReference type="NCBI Taxonomy" id="272563"/>
    <lineage>
        <taxon>Bacteria</taxon>
        <taxon>Bacillati</taxon>
        <taxon>Bacillota</taxon>
        <taxon>Clostridia</taxon>
        <taxon>Peptostreptococcales</taxon>
        <taxon>Peptostreptococcaceae</taxon>
        <taxon>Clostridioides</taxon>
    </lineage>
</organism>
<sequence length="425" mass="45849">MGMTMTQKILAKHAKLNEVKKGQLIEADLDVVLGNDITSPVAIREFEKLGIEDVYDKTKVVMVLDHFTPNKDIKSAEQCKFTRSFAKSKGVVNFFDVGDMGIEHVLLPEKGIVTAGDVIIGADSHTCTYGALGAFSTGVGSTDMGAGMATGKCWFKVPGAIKFVLKNKPNKWISGKDIILHIIGEIGVDGALYKSMEFCGDGVEYLSMDDRFTICNMAIEAGAKNGIFPVDDKTMEYINSHKCSTMTKDVNIYEADEDAVYDEVYEIDLAKLKETVAFPHLPENTRTVDEIDKDIKIDQVVIGSCTNGRISDLEVVAEIMKGKKVADGVRVMIFPGTQKVYLEAIEKGYITTFIEAGAAVSTPTCGPCLGGHMGILAAGEKSISTTNRNFVGRMGHVDSEVYLASPAVAAASAITGKISKPSEII</sequence>
<keyword id="KW-0004">4Fe-4S</keyword>
<keyword id="KW-0028">Amino-acid biosynthesis</keyword>
<keyword id="KW-0100">Branched-chain amino acid biosynthesis</keyword>
<keyword id="KW-0408">Iron</keyword>
<keyword id="KW-0411">Iron-sulfur</keyword>
<keyword id="KW-0432">Leucine biosynthesis</keyword>
<keyword id="KW-0456">Lyase</keyword>
<keyword id="KW-0479">Metal-binding</keyword>
<keyword id="KW-1185">Reference proteome</keyword>
<dbReference type="EC" id="4.2.1.33" evidence="1"/>
<dbReference type="EMBL" id="AM180355">
    <property type="protein sequence ID" value="CAJ67831.1"/>
    <property type="molecule type" value="Genomic_DNA"/>
</dbReference>
<dbReference type="RefSeq" id="WP_009895941.1">
    <property type="nucleotide sequence ID" value="NZ_JAUPES010000032.1"/>
</dbReference>
<dbReference type="RefSeq" id="YP_001087471.1">
    <property type="nucleotide sequence ID" value="NC_009089.1"/>
</dbReference>
<dbReference type="SMR" id="Q18AJ2"/>
<dbReference type="STRING" id="272563.CD630_09900"/>
<dbReference type="EnsemblBacteria" id="CAJ67831">
    <property type="protein sequence ID" value="CAJ67831"/>
    <property type="gene ID" value="CD630_09900"/>
</dbReference>
<dbReference type="KEGG" id="cdf:CD630_09900"/>
<dbReference type="KEGG" id="pdc:CDIF630_01126"/>
<dbReference type="PATRIC" id="fig|272563.120.peg.1029"/>
<dbReference type="eggNOG" id="COG0065">
    <property type="taxonomic scope" value="Bacteria"/>
</dbReference>
<dbReference type="OrthoDB" id="9802769at2"/>
<dbReference type="PhylomeDB" id="Q18AJ2"/>
<dbReference type="BioCyc" id="PDIF272563:G12WB-1105-MONOMER"/>
<dbReference type="UniPathway" id="UPA00048">
    <property type="reaction ID" value="UER00071"/>
</dbReference>
<dbReference type="Proteomes" id="UP000001978">
    <property type="component" value="Chromosome"/>
</dbReference>
<dbReference type="GO" id="GO:0003861">
    <property type="term" value="F:3-isopropylmalate dehydratase activity"/>
    <property type="evidence" value="ECO:0007669"/>
    <property type="project" value="UniProtKB-UniRule"/>
</dbReference>
<dbReference type="GO" id="GO:0051539">
    <property type="term" value="F:4 iron, 4 sulfur cluster binding"/>
    <property type="evidence" value="ECO:0007669"/>
    <property type="project" value="UniProtKB-KW"/>
</dbReference>
<dbReference type="GO" id="GO:0046872">
    <property type="term" value="F:metal ion binding"/>
    <property type="evidence" value="ECO:0007669"/>
    <property type="project" value="UniProtKB-KW"/>
</dbReference>
<dbReference type="GO" id="GO:0009098">
    <property type="term" value="P:L-leucine biosynthetic process"/>
    <property type="evidence" value="ECO:0007669"/>
    <property type="project" value="UniProtKB-UniRule"/>
</dbReference>
<dbReference type="CDD" id="cd01583">
    <property type="entry name" value="IPMI"/>
    <property type="match status" value="1"/>
</dbReference>
<dbReference type="Gene3D" id="3.30.499.10">
    <property type="entry name" value="Aconitase, domain 3"/>
    <property type="match status" value="2"/>
</dbReference>
<dbReference type="HAMAP" id="MF_01027">
    <property type="entry name" value="LeuC_type2"/>
    <property type="match status" value="1"/>
</dbReference>
<dbReference type="InterPro" id="IPR015931">
    <property type="entry name" value="Acnase/IPM_dHydase_lsu_aba_1/3"/>
</dbReference>
<dbReference type="InterPro" id="IPR001030">
    <property type="entry name" value="Acoase/IPM_deHydtase_lsu_aba"/>
</dbReference>
<dbReference type="InterPro" id="IPR018136">
    <property type="entry name" value="Aconitase_4Fe-4S_BS"/>
</dbReference>
<dbReference type="InterPro" id="IPR036008">
    <property type="entry name" value="Aconitase_4Fe-4S_dom"/>
</dbReference>
<dbReference type="InterPro" id="IPR011826">
    <property type="entry name" value="HAcnase/IPMdehydase_lsu_prok"/>
</dbReference>
<dbReference type="InterPro" id="IPR006251">
    <property type="entry name" value="Homoacnase/IPMdehydase_lsu"/>
</dbReference>
<dbReference type="InterPro" id="IPR050067">
    <property type="entry name" value="IPM_dehydratase_rel_enz"/>
</dbReference>
<dbReference type="InterPro" id="IPR033941">
    <property type="entry name" value="IPMI_cat"/>
</dbReference>
<dbReference type="InterPro" id="IPR011823">
    <property type="entry name" value="IsopropMal_deHydtase_lsu_bac"/>
</dbReference>
<dbReference type="NCBIfam" id="TIGR01343">
    <property type="entry name" value="hacA_fam"/>
    <property type="match status" value="1"/>
</dbReference>
<dbReference type="NCBIfam" id="TIGR02086">
    <property type="entry name" value="IPMI_arch"/>
    <property type="match status" value="1"/>
</dbReference>
<dbReference type="NCBIfam" id="TIGR02083">
    <property type="entry name" value="LEU2"/>
    <property type="match status" value="1"/>
</dbReference>
<dbReference type="NCBIfam" id="NF001614">
    <property type="entry name" value="PRK00402.1"/>
    <property type="match status" value="1"/>
</dbReference>
<dbReference type="PANTHER" id="PTHR43822:SF16">
    <property type="entry name" value="3-ISOPROPYLMALATE DEHYDRATASE LARGE SUBUNIT 2"/>
    <property type="match status" value="1"/>
</dbReference>
<dbReference type="PANTHER" id="PTHR43822">
    <property type="entry name" value="HOMOACONITASE, MITOCHONDRIAL-RELATED"/>
    <property type="match status" value="1"/>
</dbReference>
<dbReference type="Pfam" id="PF00330">
    <property type="entry name" value="Aconitase"/>
    <property type="match status" value="1"/>
</dbReference>
<dbReference type="PRINTS" id="PR00415">
    <property type="entry name" value="ACONITASE"/>
</dbReference>
<dbReference type="SUPFAM" id="SSF53732">
    <property type="entry name" value="Aconitase iron-sulfur domain"/>
    <property type="match status" value="1"/>
</dbReference>
<dbReference type="PROSITE" id="PS00450">
    <property type="entry name" value="ACONITASE_1"/>
    <property type="match status" value="1"/>
</dbReference>
<dbReference type="PROSITE" id="PS01244">
    <property type="entry name" value="ACONITASE_2"/>
    <property type="match status" value="1"/>
</dbReference>
<proteinExistence type="inferred from homology"/>
<evidence type="ECO:0000255" key="1">
    <source>
        <dbReference type="HAMAP-Rule" id="MF_01027"/>
    </source>
</evidence>
<feature type="chain" id="PRO_1000063643" description="3-isopropylmalate dehydratase large subunit">
    <location>
        <begin position="1"/>
        <end position="425"/>
    </location>
</feature>
<feature type="binding site" evidence="1">
    <location>
        <position position="305"/>
    </location>
    <ligand>
        <name>[4Fe-4S] cluster</name>
        <dbReference type="ChEBI" id="CHEBI:49883"/>
    </ligand>
</feature>
<feature type="binding site" evidence="1">
    <location>
        <position position="365"/>
    </location>
    <ligand>
        <name>[4Fe-4S] cluster</name>
        <dbReference type="ChEBI" id="CHEBI:49883"/>
    </ligand>
</feature>
<feature type="binding site" evidence="1">
    <location>
        <position position="368"/>
    </location>
    <ligand>
        <name>[4Fe-4S] cluster</name>
        <dbReference type="ChEBI" id="CHEBI:49883"/>
    </ligand>
</feature>
<gene>
    <name evidence="1" type="primary">leuC</name>
    <name type="ordered locus">CD630_09900</name>
</gene>
<accession>Q18AJ2</accession>
<comment type="function">
    <text evidence="1">Catalyzes the isomerization between 2-isopropylmalate and 3-isopropylmalate, via the formation of 2-isopropylmaleate.</text>
</comment>
<comment type="catalytic activity">
    <reaction evidence="1">
        <text>(2R,3S)-3-isopropylmalate = (2S)-2-isopropylmalate</text>
        <dbReference type="Rhea" id="RHEA:32287"/>
        <dbReference type="ChEBI" id="CHEBI:1178"/>
        <dbReference type="ChEBI" id="CHEBI:35121"/>
        <dbReference type="EC" id="4.2.1.33"/>
    </reaction>
</comment>
<comment type="cofactor">
    <cofactor evidence="1">
        <name>[4Fe-4S] cluster</name>
        <dbReference type="ChEBI" id="CHEBI:49883"/>
    </cofactor>
    <text evidence="1">Binds 1 [4Fe-4S] cluster per subunit.</text>
</comment>
<comment type="pathway">
    <text evidence="1">Amino-acid biosynthesis; L-leucine biosynthesis; L-leucine from 3-methyl-2-oxobutanoate: step 2/4.</text>
</comment>
<comment type="subunit">
    <text evidence="1">Heterodimer of LeuC and LeuD.</text>
</comment>
<comment type="similarity">
    <text evidence="1">Belongs to the aconitase/IPM isomerase family. LeuC type 2 subfamily.</text>
</comment>
<reference key="1">
    <citation type="journal article" date="2006" name="Nat. Genet.">
        <title>The multidrug-resistant human pathogen Clostridium difficile has a highly mobile, mosaic genome.</title>
        <authorList>
            <person name="Sebaihia M."/>
            <person name="Wren B.W."/>
            <person name="Mullany P."/>
            <person name="Fairweather N.F."/>
            <person name="Minton N."/>
            <person name="Stabler R."/>
            <person name="Thomson N.R."/>
            <person name="Roberts A.P."/>
            <person name="Cerdeno-Tarraga A.M."/>
            <person name="Wang H."/>
            <person name="Holden M.T.G."/>
            <person name="Wright A."/>
            <person name="Churcher C."/>
            <person name="Quail M.A."/>
            <person name="Baker S."/>
            <person name="Bason N."/>
            <person name="Brooks K."/>
            <person name="Chillingworth T."/>
            <person name="Cronin A."/>
            <person name="Davis P."/>
            <person name="Dowd L."/>
            <person name="Fraser A."/>
            <person name="Feltwell T."/>
            <person name="Hance Z."/>
            <person name="Holroyd S."/>
            <person name="Jagels K."/>
            <person name="Moule S."/>
            <person name="Mungall K."/>
            <person name="Price C."/>
            <person name="Rabbinowitsch E."/>
            <person name="Sharp S."/>
            <person name="Simmonds M."/>
            <person name="Stevens K."/>
            <person name="Unwin L."/>
            <person name="Whithead S."/>
            <person name="Dupuy B."/>
            <person name="Dougan G."/>
            <person name="Barrell B."/>
            <person name="Parkhill J."/>
        </authorList>
    </citation>
    <scope>NUCLEOTIDE SEQUENCE [LARGE SCALE GENOMIC DNA]</scope>
    <source>
        <strain>630</strain>
    </source>
</reference>
<name>LEUC_CLOD6</name>